<dbReference type="EC" id="2.4.2.-" evidence="3"/>
<dbReference type="EMBL" id="MG763173">
    <property type="protein sequence ID" value="AUR26647.1"/>
    <property type="molecule type" value="mRNA"/>
</dbReference>
<dbReference type="EMBL" id="AP003621">
    <property type="protein sequence ID" value="BAD53603.1"/>
    <property type="molecule type" value="Genomic_DNA"/>
</dbReference>
<dbReference type="EMBL" id="AP003761">
    <property type="protein sequence ID" value="BAD53816.1"/>
    <property type="molecule type" value="Genomic_DNA"/>
</dbReference>
<dbReference type="EMBL" id="AP008212">
    <property type="protein sequence ID" value="BAF20437.1"/>
    <property type="status" value="ALT_SEQ"/>
    <property type="molecule type" value="Genomic_DNA"/>
</dbReference>
<dbReference type="EMBL" id="AP014962">
    <property type="protein sequence ID" value="BAS99411.1"/>
    <property type="molecule type" value="Genomic_DNA"/>
</dbReference>
<dbReference type="EMBL" id="CM000143">
    <property type="protein sequence ID" value="EAZ38226.1"/>
    <property type="molecule type" value="Genomic_DNA"/>
</dbReference>
<dbReference type="RefSeq" id="XP_015642126.1">
    <property type="nucleotide sequence ID" value="XM_015786640.1"/>
</dbReference>
<dbReference type="SMR" id="Q5Z8T8"/>
<dbReference type="FunCoup" id="Q5Z8T8">
    <property type="interactions" value="122"/>
</dbReference>
<dbReference type="STRING" id="39947.Q5Z8T8"/>
<dbReference type="CAZy" id="GT61">
    <property type="family name" value="Glycosyltransferase Family 61"/>
</dbReference>
<dbReference type="GlyCosmos" id="Q5Z8T8">
    <property type="glycosylation" value="5 sites, No reported glycans"/>
</dbReference>
<dbReference type="PaxDb" id="39947-Q5Z8T8"/>
<dbReference type="EnsemblPlants" id="Os06t0707000-01">
    <property type="protein sequence ID" value="Os06t0707000-01"/>
    <property type="gene ID" value="Os06g0707000"/>
</dbReference>
<dbReference type="GeneID" id="4342010"/>
<dbReference type="Gramene" id="Os06t0707000-01">
    <property type="protein sequence ID" value="Os06t0707000-01"/>
    <property type="gene ID" value="Os06g0707000"/>
</dbReference>
<dbReference type="KEGG" id="dosa:Os06g0707000"/>
<dbReference type="KEGG" id="osa:4342010"/>
<dbReference type="eggNOG" id="KOG4698">
    <property type="taxonomic scope" value="Eukaryota"/>
</dbReference>
<dbReference type="HOGENOM" id="CLU_016869_3_2_1"/>
<dbReference type="InParanoid" id="Q5Z8T8"/>
<dbReference type="OMA" id="FTHIANS"/>
<dbReference type="OrthoDB" id="529273at2759"/>
<dbReference type="BRENDA" id="2.4.2.38">
    <property type="organism ID" value="8948"/>
</dbReference>
<dbReference type="Proteomes" id="UP000000763">
    <property type="component" value="Chromosome 6"/>
</dbReference>
<dbReference type="Proteomes" id="UP000007752">
    <property type="component" value="Chromosome 6"/>
</dbReference>
<dbReference type="Proteomes" id="UP000059680">
    <property type="component" value="Chromosome 6"/>
</dbReference>
<dbReference type="GO" id="GO:0000139">
    <property type="term" value="C:Golgi membrane"/>
    <property type="evidence" value="ECO:0000314"/>
    <property type="project" value="UniProtKB"/>
</dbReference>
<dbReference type="GO" id="GO:0035252">
    <property type="term" value="F:UDP-xylosyltransferase activity"/>
    <property type="evidence" value="ECO:0000314"/>
    <property type="project" value="UniProtKB"/>
</dbReference>
<dbReference type="GO" id="GO:0009664">
    <property type="term" value="P:plant-type cell wall organization"/>
    <property type="evidence" value="ECO:0000315"/>
    <property type="project" value="UniProtKB"/>
</dbReference>
<dbReference type="InterPro" id="IPR049625">
    <property type="entry name" value="Glyco_transf_61_cat"/>
</dbReference>
<dbReference type="InterPro" id="IPR007657">
    <property type="entry name" value="Glycosyltransferase_61"/>
</dbReference>
<dbReference type="PANTHER" id="PTHR20961:SF129">
    <property type="entry name" value="BETA-1,2-XYLOSYLTRANSFERASE XYXT1"/>
    <property type="match status" value="1"/>
</dbReference>
<dbReference type="PANTHER" id="PTHR20961">
    <property type="entry name" value="GLYCOSYLTRANSFERASE"/>
    <property type="match status" value="1"/>
</dbReference>
<dbReference type="Pfam" id="PF04577">
    <property type="entry name" value="Glyco_transf_61"/>
    <property type="match status" value="1"/>
</dbReference>
<protein>
    <recommendedName>
        <fullName evidence="5">Beta-1,2-xylosyltransferase XYXT1</fullName>
        <ecNumber evidence="3">2.4.2.-</ecNumber>
    </recommendedName>
    <alternativeName>
        <fullName evidence="4">Xylan xylosyltransferase 1</fullName>
    </alternativeName>
</protein>
<accession>Q5Z8T8</accession>
<accession>Q0D9N6</accession>
<name>XYXT1_ORYSJ</name>
<keyword id="KW-0961">Cell wall biogenesis/degradation</keyword>
<keyword id="KW-0325">Glycoprotein</keyword>
<keyword id="KW-0328">Glycosyltransferase</keyword>
<keyword id="KW-0333">Golgi apparatus</keyword>
<keyword id="KW-0472">Membrane</keyword>
<keyword id="KW-1185">Reference proteome</keyword>
<keyword id="KW-0735">Signal-anchor</keyword>
<keyword id="KW-0808">Transferase</keyword>
<keyword id="KW-0812">Transmembrane</keyword>
<keyword id="KW-1133">Transmembrane helix</keyword>
<gene>
    <name evidence="4" type="primary">XYXT1</name>
    <name evidence="9" type="ordered locus">Os06g0707000</name>
    <name evidence="5" type="ordered locus">LOC_Os06g49300</name>
    <name evidence="10" type="ORF">OsJ_22601</name>
    <name evidence="8" type="ORF">P0018H04.33</name>
    <name evidence="7" type="ORF">P0621D05.21</name>
</gene>
<proteinExistence type="evidence at protein level"/>
<feature type="chain" id="PRO_0000445785" description="Beta-1,2-xylosyltransferase XYXT1">
    <location>
        <begin position="1"/>
        <end position="465"/>
    </location>
</feature>
<feature type="topological domain" description="Cytoplasmic" evidence="5">
    <location>
        <begin position="1"/>
        <end position="11"/>
    </location>
</feature>
<feature type="transmembrane region" description="Helical; Signal-anchor for type II membrane protein" evidence="1">
    <location>
        <begin position="12"/>
        <end position="32"/>
    </location>
</feature>
<feature type="topological domain" description="Lumenal" evidence="5">
    <location>
        <begin position="33"/>
        <end position="465"/>
    </location>
</feature>
<feature type="glycosylation site" description="N-linked (GlcNAc...) asparagine" evidence="2">
    <location>
        <position position="80"/>
    </location>
</feature>
<feature type="glycosylation site" description="N-linked (GlcNAc...) asparagine" evidence="2">
    <location>
        <position position="118"/>
    </location>
</feature>
<feature type="glycosylation site" description="N-linked (GlcNAc...) asparagine" evidence="2">
    <location>
        <position position="125"/>
    </location>
</feature>
<feature type="glycosylation site" description="N-linked (GlcNAc...) asparagine" evidence="2">
    <location>
        <position position="266"/>
    </location>
</feature>
<feature type="glycosylation site" description="N-linked (GlcNAc...) asparagine" evidence="2">
    <location>
        <position position="403"/>
    </location>
</feature>
<evidence type="ECO:0000255" key="1"/>
<evidence type="ECO:0000255" key="2">
    <source>
        <dbReference type="PROSITE-ProRule" id="PRU00498"/>
    </source>
</evidence>
<evidence type="ECO:0000269" key="3">
    <source>
    </source>
</evidence>
<evidence type="ECO:0000303" key="4">
    <source>
    </source>
</evidence>
<evidence type="ECO:0000305" key="5"/>
<evidence type="ECO:0000305" key="6">
    <source>
    </source>
</evidence>
<evidence type="ECO:0000312" key="7">
    <source>
        <dbReference type="EMBL" id="BAD53603.1"/>
    </source>
</evidence>
<evidence type="ECO:0000312" key="8">
    <source>
        <dbReference type="EMBL" id="BAD53816.1"/>
    </source>
</evidence>
<evidence type="ECO:0000312" key="9">
    <source>
        <dbReference type="EMBL" id="BAS99411.1"/>
    </source>
</evidence>
<evidence type="ECO:0000312" key="10">
    <source>
        <dbReference type="EMBL" id="EAZ38226.1"/>
    </source>
</evidence>
<sequence length="465" mass="52682">MKAAVRSKKSKGSFCHPPLLLLIVAIQFLVIYSPTLDQYMVMLTTGKPGFPSMLIDGRRSFKQVDEFIPEPHLRCDFRDNRSDVCEMEGAIRILGRTSEVFLVAPSLASISGGGGGVNATGVDANATRWKIQPYTRKGESRVMPGITEVTVRLVTADEAPPCDEWHDVPAIVYSNGGYCGNYYHDFNDNIIPLFITSRHLAGEVQLLVTQKQRWWFGKYREIVEGLTKYEPVDLDAEQRVRCYRRATVGLHSHKDLSIDPRRAPNNYSMVDFKRFLMWRYALPREHAIRMEEEDKSKKPRLLVINRRSRRRFVNLDEIVAAAEGVGFEVAAAELDAHIPAAASAVNSYDAMVAVHGSGLTNLVFLPMNAVVIQVVPLGRMEGLAMDEYGVPPRDMNMRYLQYNITAEESTLSEVYPRAHPVFLDPLPIHKQSWSLVKDIYLGQQDVRLDVRRFRPVLLKALHLLR</sequence>
<organism>
    <name type="scientific">Oryza sativa subsp. japonica</name>
    <name type="common">Rice</name>
    <dbReference type="NCBI Taxonomy" id="39947"/>
    <lineage>
        <taxon>Eukaryota</taxon>
        <taxon>Viridiplantae</taxon>
        <taxon>Streptophyta</taxon>
        <taxon>Embryophyta</taxon>
        <taxon>Tracheophyta</taxon>
        <taxon>Spermatophyta</taxon>
        <taxon>Magnoliopsida</taxon>
        <taxon>Liliopsida</taxon>
        <taxon>Poales</taxon>
        <taxon>Poaceae</taxon>
        <taxon>BOP clade</taxon>
        <taxon>Oryzoideae</taxon>
        <taxon>Oryzeae</taxon>
        <taxon>Oryzinae</taxon>
        <taxon>Oryza</taxon>
        <taxon>Oryza sativa</taxon>
    </lineage>
</organism>
<comment type="function">
    <text evidence="3">Glycosyltransferase involved in the xylosylation of xylan, the major hemicellulose (non-cellulosic component) of primary and secondary walls of angiosperms (PubMed:29325159). Possesses beta-1,2-xylosyltransferase activity, transferring xylose from UDP-xylose to the xylan backbone (PubMed:29325159). Catalyzes the addition of 2-O-xylosyl side chains to the xylan backbone (PubMed:29325159).</text>
</comment>
<comment type="pathway">
    <text evidence="5">Glycan metabolism.</text>
</comment>
<comment type="subcellular location">
    <subcellularLocation>
        <location evidence="3">Golgi apparatus membrane</location>
        <topology evidence="6">Single-pass type II membrane protein</topology>
    </subcellularLocation>
</comment>
<comment type="tissue specificity">
    <text evidence="3">Widely expressed.</text>
</comment>
<comment type="similarity">
    <text evidence="5">Belongs to the glycosyltransferase 61 family.</text>
</comment>
<comment type="sequence caution" evidence="5">
    <conflict type="erroneous gene model prediction">
        <sequence resource="EMBL-CDS" id="BAF20437"/>
    </conflict>
</comment>
<reference key="1">
    <citation type="journal article" date="2018" name="Plant Cell Physiol.">
        <title>A novel rice xylosyltransferase catalyzes the addition of 2-O-xylosyl side chains onto the xylan backbone.</title>
        <authorList>
            <person name="Zhong R."/>
            <person name="Cui D."/>
            <person name="Phillips D.R."/>
            <person name="Ye Z.H."/>
        </authorList>
    </citation>
    <scope>NUCLEOTIDE SEQUENCE [MRNA]</scope>
    <scope>FUNCTION</scope>
    <scope>CATALYTIC ACTIVITY</scope>
    <scope>SUBCELLULAR LOCATION</scope>
    <scope>TISSUE SPECIFICITY</scope>
</reference>
<reference key="2">
    <citation type="journal article" date="2005" name="Nature">
        <title>The map-based sequence of the rice genome.</title>
        <authorList>
            <consortium name="International rice genome sequencing project (IRGSP)"/>
        </authorList>
    </citation>
    <scope>NUCLEOTIDE SEQUENCE [LARGE SCALE GENOMIC DNA]</scope>
    <source>
        <strain>cv. Nipponbare</strain>
    </source>
</reference>
<reference key="3">
    <citation type="journal article" date="2008" name="Nucleic Acids Res.">
        <title>The rice annotation project database (RAP-DB): 2008 update.</title>
        <authorList>
            <consortium name="The rice annotation project (RAP)"/>
        </authorList>
    </citation>
    <scope>GENOME REANNOTATION</scope>
    <source>
        <strain>cv. Nipponbare</strain>
    </source>
</reference>
<reference key="4">
    <citation type="journal article" date="2013" name="Rice">
        <title>Improvement of the Oryza sativa Nipponbare reference genome using next generation sequence and optical map data.</title>
        <authorList>
            <person name="Kawahara Y."/>
            <person name="de la Bastide M."/>
            <person name="Hamilton J.P."/>
            <person name="Kanamori H."/>
            <person name="McCombie W.R."/>
            <person name="Ouyang S."/>
            <person name="Schwartz D.C."/>
            <person name="Tanaka T."/>
            <person name="Wu J."/>
            <person name="Zhou S."/>
            <person name="Childs K.L."/>
            <person name="Davidson R.M."/>
            <person name="Lin H."/>
            <person name="Quesada-Ocampo L."/>
            <person name="Vaillancourt B."/>
            <person name="Sakai H."/>
            <person name="Lee S.S."/>
            <person name="Kim J."/>
            <person name="Numa H."/>
            <person name="Itoh T."/>
            <person name="Buell C.R."/>
            <person name="Matsumoto T."/>
        </authorList>
    </citation>
    <scope>GENOME REANNOTATION</scope>
    <source>
        <strain>cv. Nipponbare</strain>
    </source>
</reference>
<reference key="5">
    <citation type="journal article" date="2005" name="PLoS Biol.">
        <title>The genomes of Oryza sativa: a history of duplications.</title>
        <authorList>
            <person name="Yu J."/>
            <person name="Wang J."/>
            <person name="Lin W."/>
            <person name="Li S."/>
            <person name="Li H."/>
            <person name="Zhou J."/>
            <person name="Ni P."/>
            <person name="Dong W."/>
            <person name="Hu S."/>
            <person name="Zeng C."/>
            <person name="Zhang J."/>
            <person name="Zhang Y."/>
            <person name="Li R."/>
            <person name="Xu Z."/>
            <person name="Li S."/>
            <person name="Li X."/>
            <person name="Zheng H."/>
            <person name="Cong L."/>
            <person name="Lin L."/>
            <person name="Yin J."/>
            <person name="Geng J."/>
            <person name="Li G."/>
            <person name="Shi J."/>
            <person name="Liu J."/>
            <person name="Lv H."/>
            <person name="Li J."/>
            <person name="Wang J."/>
            <person name="Deng Y."/>
            <person name="Ran L."/>
            <person name="Shi X."/>
            <person name="Wang X."/>
            <person name="Wu Q."/>
            <person name="Li C."/>
            <person name="Ren X."/>
            <person name="Wang J."/>
            <person name="Wang X."/>
            <person name="Li D."/>
            <person name="Liu D."/>
            <person name="Zhang X."/>
            <person name="Ji Z."/>
            <person name="Zhao W."/>
            <person name="Sun Y."/>
            <person name="Zhang Z."/>
            <person name="Bao J."/>
            <person name="Han Y."/>
            <person name="Dong L."/>
            <person name="Ji J."/>
            <person name="Chen P."/>
            <person name="Wu S."/>
            <person name="Liu J."/>
            <person name="Xiao Y."/>
            <person name="Bu D."/>
            <person name="Tan J."/>
            <person name="Yang L."/>
            <person name="Ye C."/>
            <person name="Zhang J."/>
            <person name="Xu J."/>
            <person name="Zhou Y."/>
            <person name="Yu Y."/>
            <person name="Zhang B."/>
            <person name="Zhuang S."/>
            <person name="Wei H."/>
            <person name="Liu B."/>
            <person name="Lei M."/>
            <person name="Yu H."/>
            <person name="Li Y."/>
            <person name="Xu H."/>
            <person name="Wei S."/>
            <person name="He X."/>
            <person name="Fang L."/>
            <person name="Zhang Z."/>
            <person name="Zhang Y."/>
            <person name="Huang X."/>
            <person name="Su Z."/>
            <person name="Tong W."/>
            <person name="Li J."/>
            <person name="Tong Z."/>
            <person name="Li S."/>
            <person name="Ye J."/>
            <person name="Wang L."/>
            <person name="Fang L."/>
            <person name="Lei T."/>
            <person name="Chen C.-S."/>
            <person name="Chen H.-C."/>
            <person name="Xu Z."/>
            <person name="Li H."/>
            <person name="Huang H."/>
            <person name="Zhang F."/>
            <person name="Xu H."/>
            <person name="Li N."/>
            <person name="Zhao C."/>
            <person name="Li S."/>
            <person name="Dong L."/>
            <person name="Huang Y."/>
            <person name="Li L."/>
            <person name="Xi Y."/>
            <person name="Qi Q."/>
            <person name="Li W."/>
            <person name="Zhang B."/>
            <person name="Hu W."/>
            <person name="Zhang Y."/>
            <person name="Tian X."/>
            <person name="Jiao Y."/>
            <person name="Liang X."/>
            <person name="Jin J."/>
            <person name="Gao L."/>
            <person name="Zheng W."/>
            <person name="Hao B."/>
            <person name="Liu S.-M."/>
            <person name="Wang W."/>
            <person name="Yuan L."/>
            <person name="Cao M."/>
            <person name="McDermott J."/>
            <person name="Samudrala R."/>
            <person name="Wang J."/>
            <person name="Wong G.K.-S."/>
            <person name="Yang H."/>
        </authorList>
    </citation>
    <scope>NUCLEOTIDE SEQUENCE [LARGE SCALE GENOMIC DNA]</scope>
    <source>
        <strain>cv. Nipponbare</strain>
    </source>
</reference>